<protein>
    <recommendedName>
        <fullName evidence="1">Ephrin type-B receptor 4b</fullName>
        <ecNumber evidence="3">2.7.10.1</ecNumber>
    </recommendedName>
    <alternativeName>
        <fullName evidence="11">Eph receptor B4b</fullName>
    </alternativeName>
    <alternativeName>
        <fullName evidence="10">Eph-like receptor tyrosine kinase rtk8</fullName>
    </alternativeName>
</protein>
<feature type="signal peptide" evidence="2">
    <location>
        <begin position="1"/>
        <end position="23"/>
    </location>
</feature>
<feature type="chain" id="PRO_5004160543" description="Ephrin type-B receptor 4b" evidence="2">
    <location>
        <begin position="24"/>
        <end position="976"/>
    </location>
</feature>
<feature type="topological domain" description="Extracellular" evidence="2">
    <location>
        <begin position="24"/>
        <end position="541"/>
    </location>
</feature>
<feature type="transmembrane region" description="Helical" evidence="2">
    <location>
        <begin position="542"/>
        <end position="562"/>
    </location>
</feature>
<feature type="topological domain" description="Cytoplasmic" evidence="2">
    <location>
        <begin position="563"/>
        <end position="976"/>
    </location>
</feature>
<feature type="domain" description="Eph LBD" evidence="6">
    <location>
        <begin position="25"/>
        <end position="204"/>
    </location>
</feature>
<feature type="domain" description="Fibronectin type-III 1" evidence="5">
    <location>
        <begin position="326"/>
        <end position="434"/>
    </location>
</feature>
<feature type="domain" description="Fibronectin type-III 2" evidence="5">
    <location>
        <begin position="438"/>
        <end position="529"/>
    </location>
</feature>
<feature type="domain" description="Protein kinase" evidence="3">
    <location>
        <begin position="613"/>
        <end position="897"/>
    </location>
</feature>
<feature type="domain" description="SAM" evidence="4">
    <location>
        <begin position="906"/>
        <end position="970"/>
    </location>
</feature>
<feature type="active site" description="Proton acceptor" evidence="3">
    <location>
        <position position="738"/>
    </location>
</feature>
<feature type="binding site" evidence="3">
    <location>
        <begin position="619"/>
        <end position="627"/>
    </location>
    <ligand>
        <name>ATP</name>
        <dbReference type="ChEBI" id="CHEBI:30616"/>
    </ligand>
</feature>
<feature type="binding site" evidence="3">
    <location>
        <position position="645"/>
    </location>
    <ligand>
        <name>ATP</name>
        <dbReference type="ChEBI" id="CHEBI:30616"/>
    </ligand>
</feature>
<feature type="disulfide bond" evidence="1">
    <location>
        <begin position="69"/>
        <end position="186"/>
    </location>
</feature>
<feature type="disulfide bond" evidence="1">
    <location>
        <begin position="103"/>
        <end position="113"/>
    </location>
</feature>
<feature type="sequence conflict" description="In Ref. 1; CAA06302." evidence="9" ref="1">
    <original>KK</original>
    <variation>LF</variation>
    <location>
        <begin position="173"/>
        <end position="174"/>
    </location>
</feature>
<feature type="sequence conflict" description="In Ref. 1; CAA06302." evidence="9" ref="1">
    <original>S</original>
    <variation>C</variation>
    <location>
        <position position="235"/>
    </location>
</feature>
<feature type="sequence conflict" description="In Ref. 1; CAA06302 and 3; AAI63275." evidence="9" ref="1 3">
    <original>F</original>
    <variation>S</variation>
    <location>
        <position position="299"/>
    </location>
</feature>
<feature type="sequence conflict" description="In Ref. 1; CAA06302 and 3; AAI63275." evidence="9" ref="1 3">
    <original>P</original>
    <variation>S</variation>
    <location>
        <position position="389"/>
    </location>
</feature>
<accession>O73878</accession>
<accession>B3DIW7</accession>
<accession>F1QR66</accession>
<name>EPB4B_DANRE</name>
<proteinExistence type="evidence at protein level"/>
<reference key="1">
    <citation type="journal article" date="1997" name="Dev. Genes Evol.">
        <title>Characterisation of five novel zebrafish Eph-related receptor tyrosine kinases suggests roles in patterning the neural plate.</title>
        <authorList>
            <person name="Cooke J.E."/>
            <person name="Xu Q."/>
            <person name="Wilson S.W."/>
            <person name="Holder N."/>
        </authorList>
    </citation>
    <scope>NUCLEOTIDE SEQUENCE [MRNA]</scope>
</reference>
<reference key="2">
    <citation type="journal article" date="2013" name="Nature">
        <title>The zebrafish reference genome sequence and its relationship to the human genome.</title>
        <authorList>
            <person name="Howe K."/>
            <person name="Clark M.D."/>
            <person name="Torroja C.F."/>
            <person name="Torrance J."/>
            <person name="Berthelot C."/>
            <person name="Muffato M."/>
            <person name="Collins J.E."/>
            <person name="Humphray S."/>
            <person name="McLaren K."/>
            <person name="Matthews L."/>
            <person name="McLaren S."/>
            <person name="Sealy I."/>
            <person name="Caccamo M."/>
            <person name="Churcher C."/>
            <person name="Scott C."/>
            <person name="Barrett J.C."/>
            <person name="Koch R."/>
            <person name="Rauch G.J."/>
            <person name="White S."/>
            <person name="Chow W."/>
            <person name="Kilian B."/>
            <person name="Quintais L.T."/>
            <person name="Guerra-Assuncao J.A."/>
            <person name="Zhou Y."/>
            <person name="Gu Y."/>
            <person name="Yen J."/>
            <person name="Vogel J.H."/>
            <person name="Eyre T."/>
            <person name="Redmond S."/>
            <person name="Banerjee R."/>
            <person name="Chi J."/>
            <person name="Fu B."/>
            <person name="Langley E."/>
            <person name="Maguire S.F."/>
            <person name="Laird G.K."/>
            <person name="Lloyd D."/>
            <person name="Kenyon E."/>
            <person name="Donaldson S."/>
            <person name="Sehra H."/>
            <person name="Almeida-King J."/>
            <person name="Loveland J."/>
            <person name="Trevanion S."/>
            <person name="Jones M."/>
            <person name="Quail M."/>
            <person name="Willey D."/>
            <person name="Hunt A."/>
            <person name="Burton J."/>
            <person name="Sims S."/>
            <person name="McLay K."/>
            <person name="Plumb B."/>
            <person name="Davis J."/>
            <person name="Clee C."/>
            <person name="Oliver K."/>
            <person name="Clark R."/>
            <person name="Riddle C."/>
            <person name="Elliot D."/>
            <person name="Threadgold G."/>
            <person name="Harden G."/>
            <person name="Ware D."/>
            <person name="Begum S."/>
            <person name="Mortimore B."/>
            <person name="Kerry G."/>
            <person name="Heath P."/>
            <person name="Phillimore B."/>
            <person name="Tracey A."/>
            <person name="Corby N."/>
            <person name="Dunn M."/>
            <person name="Johnson C."/>
            <person name="Wood J."/>
            <person name="Clark S."/>
            <person name="Pelan S."/>
            <person name="Griffiths G."/>
            <person name="Smith M."/>
            <person name="Glithero R."/>
            <person name="Howden P."/>
            <person name="Barker N."/>
            <person name="Lloyd C."/>
            <person name="Stevens C."/>
            <person name="Harley J."/>
            <person name="Holt K."/>
            <person name="Panagiotidis G."/>
            <person name="Lovell J."/>
            <person name="Beasley H."/>
            <person name="Henderson C."/>
            <person name="Gordon D."/>
            <person name="Auger K."/>
            <person name="Wright D."/>
            <person name="Collins J."/>
            <person name="Raisen C."/>
            <person name="Dyer L."/>
            <person name="Leung K."/>
            <person name="Robertson L."/>
            <person name="Ambridge K."/>
            <person name="Leongamornlert D."/>
            <person name="McGuire S."/>
            <person name="Gilderthorp R."/>
            <person name="Griffiths C."/>
            <person name="Manthravadi D."/>
            <person name="Nichol S."/>
            <person name="Barker G."/>
            <person name="Whitehead S."/>
            <person name="Kay M."/>
            <person name="Brown J."/>
            <person name="Murnane C."/>
            <person name="Gray E."/>
            <person name="Humphries M."/>
            <person name="Sycamore N."/>
            <person name="Barker D."/>
            <person name="Saunders D."/>
            <person name="Wallis J."/>
            <person name="Babbage A."/>
            <person name="Hammond S."/>
            <person name="Mashreghi-Mohammadi M."/>
            <person name="Barr L."/>
            <person name="Martin S."/>
            <person name="Wray P."/>
            <person name="Ellington A."/>
            <person name="Matthews N."/>
            <person name="Ellwood M."/>
            <person name="Woodmansey R."/>
            <person name="Clark G."/>
            <person name="Cooper J."/>
            <person name="Tromans A."/>
            <person name="Grafham D."/>
            <person name="Skuce C."/>
            <person name="Pandian R."/>
            <person name="Andrews R."/>
            <person name="Harrison E."/>
            <person name="Kimberley A."/>
            <person name="Garnett J."/>
            <person name="Fosker N."/>
            <person name="Hall R."/>
            <person name="Garner P."/>
            <person name="Kelly D."/>
            <person name="Bird C."/>
            <person name="Palmer S."/>
            <person name="Gehring I."/>
            <person name="Berger A."/>
            <person name="Dooley C.M."/>
            <person name="Ersan-Urun Z."/>
            <person name="Eser C."/>
            <person name="Geiger H."/>
            <person name="Geisler M."/>
            <person name="Karotki L."/>
            <person name="Kirn A."/>
            <person name="Konantz J."/>
            <person name="Konantz M."/>
            <person name="Oberlander M."/>
            <person name="Rudolph-Geiger S."/>
            <person name="Teucke M."/>
            <person name="Lanz C."/>
            <person name="Raddatz G."/>
            <person name="Osoegawa K."/>
            <person name="Zhu B."/>
            <person name="Rapp A."/>
            <person name="Widaa S."/>
            <person name="Langford C."/>
            <person name="Yang F."/>
            <person name="Schuster S.C."/>
            <person name="Carter N.P."/>
            <person name="Harrow J."/>
            <person name="Ning Z."/>
            <person name="Herrero J."/>
            <person name="Searle S.M."/>
            <person name="Enright A."/>
            <person name="Geisler R."/>
            <person name="Plasterk R.H."/>
            <person name="Lee C."/>
            <person name="Westerfield M."/>
            <person name="de Jong P.J."/>
            <person name="Zon L.I."/>
            <person name="Postlethwait J.H."/>
            <person name="Nusslein-Volhard C."/>
            <person name="Hubbard T.J."/>
            <person name="Roest Crollius H."/>
            <person name="Rogers J."/>
            <person name="Stemple D.L."/>
        </authorList>
    </citation>
    <scope>NUCLEOTIDE SEQUENCE [LARGE SCALE GENOMIC DNA]</scope>
    <source>
        <strain>Tuebingen</strain>
    </source>
</reference>
<reference key="3">
    <citation type="submission" date="2008-04" db="EMBL/GenBank/DDBJ databases">
        <authorList>
            <consortium name="NIH - Zebrafish Gene Collection (ZGC) project"/>
        </authorList>
    </citation>
    <scope>NUCLEOTIDE SEQUENCE [LARGE SCALE MRNA]</scope>
</reference>
<reference key="4">
    <citation type="journal article" date="1998" name="Genes Dev.">
        <title>Eph signaling is required for segmentation and differentiation of the somites.</title>
        <authorList>
            <person name="Durbin L."/>
            <person name="Brennan C."/>
            <person name="Shiomi K."/>
            <person name="Cooke J."/>
            <person name="Barrios A."/>
            <person name="Shanmugalingam S."/>
            <person name="Guthrie B."/>
            <person name="Lindberg R."/>
            <person name="Holder N."/>
        </authorList>
    </citation>
    <scope>FUNCTION</scope>
</reference>
<gene>
    <name evidence="11" type="primary">ephb4b</name>
    <name evidence="8" type="synonym">rtk8</name>
</gene>
<keyword id="KW-0067">ATP-binding</keyword>
<keyword id="KW-1003">Cell membrane</keyword>
<keyword id="KW-1015">Disulfide bond</keyword>
<keyword id="KW-0418">Kinase</keyword>
<keyword id="KW-0472">Membrane</keyword>
<keyword id="KW-0547">Nucleotide-binding</keyword>
<keyword id="KW-0675">Receptor</keyword>
<keyword id="KW-1185">Reference proteome</keyword>
<keyword id="KW-0677">Repeat</keyword>
<keyword id="KW-0732">Signal</keyword>
<keyword id="KW-0808">Transferase</keyword>
<keyword id="KW-0812">Transmembrane</keyword>
<keyword id="KW-1133">Transmembrane helix</keyword>
<keyword id="KW-0829">Tyrosine-protein kinase</keyword>
<dbReference type="EC" id="2.7.10.1" evidence="3"/>
<dbReference type="EMBL" id="AJ005029">
    <property type="protein sequence ID" value="CAA06302.1"/>
    <property type="molecule type" value="mRNA"/>
</dbReference>
<dbReference type="EMBL" id="CU694439">
    <property type="status" value="NOT_ANNOTATED_CDS"/>
    <property type="molecule type" value="Genomic_DNA"/>
</dbReference>
<dbReference type="EMBL" id="FO904964">
    <property type="status" value="NOT_ANNOTATED_CDS"/>
    <property type="molecule type" value="Genomic_DNA"/>
</dbReference>
<dbReference type="EMBL" id="BC163275">
    <property type="protein sequence ID" value="AAI63275.1"/>
    <property type="molecule type" value="mRNA"/>
</dbReference>
<dbReference type="RefSeq" id="NP_571492.1">
    <property type="nucleotide sequence ID" value="NM_131417.1"/>
</dbReference>
<dbReference type="SMR" id="O73878"/>
<dbReference type="FunCoup" id="O73878">
    <property type="interactions" value="625"/>
</dbReference>
<dbReference type="IntAct" id="O73878">
    <property type="interactions" value="2"/>
</dbReference>
<dbReference type="STRING" id="7955.ENSDARP00000088414"/>
<dbReference type="PaxDb" id="7955-ENSDARP00000088414"/>
<dbReference type="DNASU" id="30691"/>
<dbReference type="Ensembl" id="ENSDART00000097644">
    <property type="protein sequence ID" value="ENSDARP00000088414"/>
    <property type="gene ID" value="ENSDARG00000027112"/>
</dbReference>
<dbReference type="GeneID" id="30691"/>
<dbReference type="KEGG" id="dre:30691"/>
<dbReference type="AGR" id="ZFIN:ZDB-GENE-990415-65"/>
<dbReference type="CTD" id="30691"/>
<dbReference type="ZFIN" id="ZDB-GENE-990415-65">
    <property type="gene designation" value="ephb4b"/>
</dbReference>
<dbReference type="eggNOG" id="KOG0196">
    <property type="taxonomic scope" value="Eukaryota"/>
</dbReference>
<dbReference type="InParanoid" id="O73878"/>
<dbReference type="OMA" id="YCYRRRV"/>
<dbReference type="OrthoDB" id="4062651at2759"/>
<dbReference type="PhylomeDB" id="O73878"/>
<dbReference type="TreeFam" id="TF315608"/>
<dbReference type="PRO" id="PR:O73878"/>
<dbReference type="Proteomes" id="UP000000437">
    <property type="component" value="Chromosome 23"/>
</dbReference>
<dbReference type="Bgee" id="ENSDARG00000027112">
    <property type="expression patterns" value="Expressed in anterior neural keel and 49 other cell types or tissues"/>
</dbReference>
<dbReference type="ExpressionAtlas" id="O73878">
    <property type="expression patterns" value="baseline and differential"/>
</dbReference>
<dbReference type="GO" id="GO:0005886">
    <property type="term" value="C:plasma membrane"/>
    <property type="evidence" value="ECO:0000318"/>
    <property type="project" value="GO_Central"/>
</dbReference>
<dbReference type="GO" id="GO:0043235">
    <property type="term" value="C:receptor complex"/>
    <property type="evidence" value="ECO:0000318"/>
    <property type="project" value="GO_Central"/>
</dbReference>
<dbReference type="GO" id="GO:0005524">
    <property type="term" value="F:ATP binding"/>
    <property type="evidence" value="ECO:0007669"/>
    <property type="project" value="UniProtKB-KW"/>
</dbReference>
<dbReference type="GO" id="GO:0005003">
    <property type="term" value="F:ephrin receptor activity"/>
    <property type="evidence" value="ECO:0007669"/>
    <property type="project" value="InterPro"/>
</dbReference>
<dbReference type="GO" id="GO:0004714">
    <property type="term" value="F:transmembrane receptor protein tyrosine kinase activity"/>
    <property type="evidence" value="ECO:0000318"/>
    <property type="project" value="GO_Central"/>
</dbReference>
<dbReference type="GO" id="GO:0048013">
    <property type="term" value="P:ephrin receptor signaling pathway"/>
    <property type="evidence" value="ECO:0000318"/>
    <property type="project" value="GO_Central"/>
</dbReference>
<dbReference type="GO" id="GO:0070121">
    <property type="term" value="P:Kupffer's vesicle development"/>
    <property type="evidence" value="ECO:0000315"/>
    <property type="project" value="ZFIN"/>
</dbReference>
<dbReference type="GO" id="GO:0001756">
    <property type="term" value="P:somitogenesis"/>
    <property type="evidence" value="ECO:0000315"/>
    <property type="project" value="UniProtKB"/>
</dbReference>
<dbReference type="CDD" id="cd00063">
    <property type="entry name" value="FN3"/>
    <property type="match status" value="2"/>
</dbReference>
<dbReference type="CDD" id="cd05065">
    <property type="entry name" value="PTKc_EphR_B"/>
    <property type="match status" value="1"/>
</dbReference>
<dbReference type="FunFam" id="1.10.150.50:FF:000001">
    <property type="entry name" value="Ephrin type-A receptor 5"/>
    <property type="match status" value="1"/>
</dbReference>
<dbReference type="FunFam" id="2.10.50.10:FF:000001">
    <property type="entry name" value="Ephrin type-A receptor 5"/>
    <property type="match status" value="1"/>
</dbReference>
<dbReference type="FunFam" id="3.30.200.20:FF:000001">
    <property type="entry name" value="Ephrin type-A receptor 5"/>
    <property type="match status" value="1"/>
</dbReference>
<dbReference type="FunFam" id="2.60.40.10:FF:000059">
    <property type="entry name" value="Ephrin type-A receptor 6"/>
    <property type="match status" value="1"/>
</dbReference>
<dbReference type="FunFam" id="1.10.510.10:FF:000015">
    <property type="entry name" value="Ephrin type-B receptor 2"/>
    <property type="match status" value="1"/>
</dbReference>
<dbReference type="FunFam" id="2.60.120.260:FF:000071">
    <property type="entry name" value="Ephrin type-B receptor 4"/>
    <property type="match status" value="1"/>
</dbReference>
<dbReference type="FunFam" id="2.60.40.10:FF:000787">
    <property type="entry name" value="ephrin type-B receptor 4"/>
    <property type="match status" value="1"/>
</dbReference>
<dbReference type="Gene3D" id="2.60.40.1770">
    <property type="entry name" value="ephrin a2 ectodomain"/>
    <property type="match status" value="1"/>
</dbReference>
<dbReference type="Gene3D" id="2.60.120.260">
    <property type="entry name" value="Galactose-binding domain-like"/>
    <property type="match status" value="1"/>
</dbReference>
<dbReference type="Gene3D" id="2.60.40.10">
    <property type="entry name" value="Immunoglobulins"/>
    <property type="match status" value="2"/>
</dbReference>
<dbReference type="Gene3D" id="3.30.200.20">
    <property type="entry name" value="Phosphorylase Kinase, domain 1"/>
    <property type="match status" value="1"/>
</dbReference>
<dbReference type="Gene3D" id="1.10.150.50">
    <property type="entry name" value="Transcription Factor, Ets-1"/>
    <property type="match status" value="1"/>
</dbReference>
<dbReference type="Gene3D" id="1.10.510.10">
    <property type="entry name" value="Transferase(Phosphotransferase) domain 1"/>
    <property type="match status" value="1"/>
</dbReference>
<dbReference type="Gene3D" id="2.10.50.10">
    <property type="entry name" value="Tumor Necrosis Factor Receptor, subunit A, domain 2"/>
    <property type="match status" value="1"/>
</dbReference>
<dbReference type="InterPro" id="IPR027936">
    <property type="entry name" value="Eph_TM"/>
</dbReference>
<dbReference type="InterPro" id="IPR001090">
    <property type="entry name" value="Ephrin_rcpt_lig-bd_dom"/>
</dbReference>
<dbReference type="InterPro" id="IPR050449">
    <property type="entry name" value="Ephrin_rcpt_TKs"/>
</dbReference>
<dbReference type="InterPro" id="IPR003961">
    <property type="entry name" value="FN3_dom"/>
</dbReference>
<dbReference type="InterPro" id="IPR036116">
    <property type="entry name" value="FN3_sf"/>
</dbReference>
<dbReference type="InterPro" id="IPR008979">
    <property type="entry name" value="Galactose-bd-like_sf"/>
</dbReference>
<dbReference type="InterPro" id="IPR013783">
    <property type="entry name" value="Ig-like_fold"/>
</dbReference>
<dbReference type="InterPro" id="IPR011009">
    <property type="entry name" value="Kinase-like_dom_sf"/>
</dbReference>
<dbReference type="InterPro" id="IPR000719">
    <property type="entry name" value="Prot_kinase_dom"/>
</dbReference>
<dbReference type="InterPro" id="IPR017441">
    <property type="entry name" value="Protein_kinase_ATP_BS"/>
</dbReference>
<dbReference type="InterPro" id="IPR001660">
    <property type="entry name" value="SAM"/>
</dbReference>
<dbReference type="InterPro" id="IPR013761">
    <property type="entry name" value="SAM/pointed_sf"/>
</dbReference>
<dbReference type="InterPro" id="IPR001245">
    <property type="entry name" value="Ser-Thr/Tyr_kinase_cat_dom"/>
</dbReference>
<dbReference type="InterPro" id="IPR008266">
    <property type="entry name" value="Tyr_kinase_AS"/>
</dbReference>
<dbReference type="InterPro" id="IPR020635">
    <property type="entry name" value="Tyr_kinase_cat_dom"/>
</dbReference>
<dbReference type="InterPro" id="IPR016257">
    <property type="entry name" value="Tyr_kinase_ephrin_rcpt"/>
</dbReference>
<dbReference type="PANTHER" id="PTHR46877">
    <property type="entry name" value="EPH RECEPTOR A5"/>
    <property type="match status" value="1"/>
</dbReference>
<dbReference type="PANTHER" id="PTHR46877:SF19">
    <property type="entry name" value="RECEPTOR PROTEIN-TYROSINE KINASE"/>
    <property type="match status" value="1"/>
</dbReference>
<dbReference type="Pfam" id="PF14575">
    <property type="entry name" value="EphA2_TM"/>
    <property type="match status" value="1"/>
</dbReference>
<dbReference type="Pfam" id="PF01404">
    <property type="entry name" value="Ephrin_lbd"/>
    <property type="match status" value="1"/>
</dbReference>
<dbReference type="Pfam" id="PF00041">
    <property type="entry name" value="fn3"/>
    <property type="match status" value="2"/>
</dbReference>
<dbReference type="Pfam" id="PF07714">
    <property type="entry name" value="PK_Tyr_Ser-Thr"/>
    <property type="match status" value="1"/>
</dbReference>
<dbReference type="Pfam" id="PF00536">
    <property type="entry name" value="SAM_1"/>
    <property type="match status" value="1"/>
</dbReference>
<dbReference type="PIRSF" id="PIRSF000666">
    <property type="entry name" value="TyrPK_ephrin_receptor"/>
    <property type="match status" value="1"/>
</dbReference>
<dbReference type="PRINTS" id="PR00109">
    <property type="entry name" value="TYRKINASE"/>
</dbReference>
<dbReference type="SMART" id="SM00615">
    <property type="entry name" value="EPH_lbd"/>
    <property type="match status" value="1"/>
</dbReference>
<dbReference type="SMART" id="SM01411">
    <property type="entry name" value="Ephrin_rec_like"/>
    <property type="match status" value="1"/>
</dbReference>
<dbReference type="SMART" id="SM00060">
    <property type="entry name" value="FN3"/>
    <property type="match status" value="2"/>
</dbReference>
<dbReference type="SMART" id="SM00454">
    <property type="entry name" value="SAM"/>
    <property type="match status" value="1"/>
</dbReference>
<dbReference type="SMART" id="SM00219">
    <property type="entry name" value="TyrKc"/>
    <property type="match status" value="1"/>
</dbReference>
<dbReference type="SUPFAM" id="SSF49265">
    <property type="entry name" value="Fibronectin type III"/>
    <property type="match status" value="1"/>
</dbReference>
<dbReference type="SUPFAM" id="SSF49785">
    <property type="entry name" value="Galactose-binding domain-like"/>
    <property type="match status" value="1"/>
</dbReference>
<dbReference type="SUPFAM" id="SSF56112">
    <property type="entry name" value="Protein kinase-like (PK-like)"/>
    <property type="match status" value="1"/>
</dbReference>
<dbReference type="SUPFAM" id="SSF47769">
    <property type="entry name" value="SAM/Pointed domain"/>
    <property type="match status" value="1"/>
</dbReference>
<dbReference type="PROSITE" id="PS01186">
    <property type="entry name" value="EGF_2"/>
    <property type="match status" value="1"/>
</dbReference>
<dbReference type="PROSITE" id="PS51550">
    <property type="entry name" value="EPH_LBD"/>
    <property type="match status" value="1"/>
</dbReference>
<dbReference type="PROSITE" id="PS50853">
    <property type="entry name" value="FN3"/>
    <property type="match status" value="2"/>
</dbReference>
<dbReference type="PROSITE" id="PS00107">
    <property type="entry name" value="PROTEIN_KINASE_ATP"/>
    <property type="match status" value="1"/>
</dbReference>
<dbReference type="PROSITE" id="PS50011">
    <property type="entry name" value="PROTEIN_KINASE_DOM"/>
    <property type="match status" value="1"/>
</dbReference>
<dbReference type="PROSITE" id="PS00109">
    <property type="entry name" value="PROTEIN_KINASE_TYR"/>
    <property type="match status" value="1"/>
</dbReference>
<dbReference type="PROSITE" id="PS50105">
    <property type="entry name" value="SAM_DOMAIN"/>
    <property type="match status" value="1"/>
</dbReference>
<organism>
    <name type="scientific">Danio rerio</name>
    <name type="common">Zebrafish</name>
    <name type="synonym">Brachydanio rerio</name>
    <dbReference type="NCBI Taxonomy" id="7955"/>
    <lineage>
        <taxon>Eukaryota</taxon>
        <taxon>Metazoa</taxon>
        <taxon>Chordata</taxon>
        <taxon>Craniata</taxon>
        <taxon>Vertebrata</taxon>
        <taxon>Euteleostomi</taxon>
        <taxon>Actinopterygii</taxon>
        <taxon>Neopterygii</taxon>
        <taxon>Teleostei</taxon>
        <taxon>Ostariophysi</taxon>
        <taxon>Cypriniformes</taxon>
        <taxon>Danionidae</taxon>
        <taxon>Danioninae</taxon>
        <taxon>Danio</taxon>
    </lineage>
</organism>
<sequence length="976" mass="108231">MDRVCWIMALSWFWMVSTGLVSAEEEVLMNTKLETSDLRWTIYPSGDPEWEEMSGLDEEGNSVRTFQVCPMDSSVSHWLRTRFIPRHGASQVYVEIRFTMMECSAMPASFRTCKETFNLYYYQSDEDTASATHPAWMENPYSKVDTVAADFLLRRGGERKSNVKTVRVGPLSKKGFYLAFQTQGACMALLSVRVFFKKCPAVSRAFSSFPETLPHSLVQQAEGVCVDNSAPTGQSTAPPTMFCGEDGQWVGPPSSTCACKPGYEPVDSDRCRACGLGQYKASVGGSLCRVCPDNSNTHFAGSSLCVCRPGYHRATSDLPDSACTKPPSAPRSIIYQINDTVVTLEWSEPLDRGGRSDLSYSVECMHCRGSLCVQCADSITYRPGQMGVPGRRVIIRGLLPHTTYTFTVLAQNGVSAVSHTSPASSSVNITTSRDVAVPVSGIRRIKASESSVSISWTVPPQTQHSIQDYQLRYSLKGQDDGWQYVSSRSSSVVLNDLSRASQYQVQVRARTAAGYGHFSSAVSISTLPDDEESPSRLMLTGVLVAIGLLILIAVVIVAVFCFRRSTRRRDPDPDKSGQFLMGQGIKVYIDPFTYEDPNEAVREFAKEIDVSFVKIEEVIGAGEFGEVCRGRLKVPGKKENYVAIKTLKGGYTDKQRRDFLSEASIMGQFQHPNIIHLEGVITASCPVMILTEYMENGALDSFLRLNDGQFTPIQLVGMLRGIASGMKYLSEMSFVHRDLAARNILVNSNLVCKVSDFGLSRFLTENSSDPTYTSSLGGKIPIRWTAPEAIAFRKFTSASDVWSYGIVMWEVMSFGERPYWDMSNQDVINAIEQDYRLPPPPECPASLHQLMLDCWQKERSSRPRFCAIVSALDRLIRNPASLKITGRIPDGPSHPLLDQRAPPPLSHCSSVADWLRAIKMERYEDAFMQAGFTAIQHITHISTEDLLRIGVTLAGHQKKILSSVQTLRIHGGSLRY</sequence>
<evidence type="ECO:0000250" key="1">
    <source>
        <dbReference type="UniProtKB" id="P54760"/>
    </source>
</evidence>
<evidence type="ECO:0000255" key="2"/>
<evidence type="ECO:0000255" key="3">
    <source>
        <dbReference type="PROSITE-ProRule" id="PRU00159"/>
    </source>
</evidence>
<evidence type="ECO:0000255" key="4">
    <source>
        <dbReference type="PROSITE-ProRule" id="PRU00184"/>
    </source>
</evidence>
<evidence type="ECO:0000255" key="5">
    <source>
        <dbReference type="PROSITE-ProRule" id="PRU00316"/>
    </source>
</evidence>
<evidence type="ECO:0000255" key="6">
    <source>
        <dbReference type="PROSITE-ProRule" id="PRU00883"/>
    </source>
</evidence>
<evidence type="ECO:0000269" key="7">
    <source>
    </source>
</evidence>
<evidence type="ECO:0000303" key="8">
    <source>
    </source>
</evidence>
<evidence type="ECO:0000305" key="9"/>
<evidence type="ECO:0000312" key="10">
    <source>
        <dbReference type="EMBL" id="CAA06302.1"/>
    </source>
</evidence>
<evidence type="ECO:0000312" key="11">
    <source>
        <dbReference type="ZFIN" id="ZDB-GENE-990415-65"/>
    </source>
</evidence>
<comment type="function">
    <text evidence="1 7">Receptor tyrosine kinase which binds promiscuously transmembrane ephrin-B family ligands residing on adjacent cells, leading to contact-dependent bidirectional signaling into neighboring cells. The signaling pathway downstream of the receptor is referred to as forward signaling while the signaling pathway downstream of the ephrin ligand is referred to as reverse signaling. Together with its cognate ligand/functional ligand EFNB2 is involved in the regulation of cell adhesion and cell migration, and plays a central role in heart morphogenesis, angiogenesis and blood vessel remodeling and permeability. EPHB4-mediated forward signaling controls cellular repulsion and segregation from EFNB2-expressing cells (By similarity). Involved in somitogenesis (PubMed:9765210).</text>
</comment>
<comment type="catalytic activity">
    <reaction evidence="3">
        <text>L-tyrosyl-[protein] + ATP = O-phospho-L-tyrosyl-[protein] + ADP + H(+)</text>
        <dbReference type="Rhea" id="RHEA:10596"/>
        <dbReference type="Rhea" id="RHEA-COMP:10136"/>
        <dbReference type="Rhea" id="RHEA-COMP:20101"/>
        <dbReference type="ChEBI" id="CHEBI:15378"/>
        <dbReference type="ChEBI" id="CHEBI:30616"/>
        <dbReference type="ChEBI" id="CHEBI:46858"/>
        <dbReference type="ChEBI" id="CHEBI:61978"/>
        <dbReference type="ChEBI" id="CHEBI:456216"/>
        <dbReference type="EC" id="2.7.10.1"/>
    </reaction>
</comment>
<comment type="interaction">
    <interactant intactId="EBI-42473330">
        <id>O73878</id>
    </interactant>
    <interactant intactId="EBI-42473274">
        <id>O73874</id>
        <label>efnb2a</label>
    </interactant>
    <organismsDiffer>false</organismsDiffer>
    <experiments>2</experiments>
</comment>
<comment type="interaction">
    <interactant intactId="EBI-42473330">
        <id>O73878</id>
    </interactant>
    <interactant intactId="EBI-42477337">
        <id>Q90Z31</id>
        <label>efnb3b</label>
    </interactant>
    <organismsDiffer>false</organismsDiffer>
    <experiments>2</experiments>
</comment>
<comment type="subcellular location">
    <subcellularLocation>
        <location evidence="1">Cell membrane</location>
        <topology evidence="1">Single-pass type I membrane protein</topology>
    </subcellularLocation>
</comment>
<comment type="similarity">
    <text evidence="3">Belongs to the protein kinase superfamily. Tyr protein kinase family. Ephrin receptor subfamily.</text>
</comment>